<sequence length="187" mass="20954">MPKINGNEIRPGNVLEHNGGLWAAVKVDHVKPGKGGAFAQVELRNLRNGSKLNERFRSADKVERVRLEQKDQQFLYESDGMLVFMDAETYEQIELPADLLGERRPFLQDGMTILVEFYESEALNATLPQKVTCKIVETEPVVKGQTAANSFKPAVLDNGVKVMVPPFVGQDEMIVVNTETMEYSERA</sequence>
<gene>
    <name evidence="1" type="primary">efp</name>
    <name type="ordered locus">SPO1244</name>
</gene>
<comment type="function">
    <text evidence="1">Involved in peptide bond synthesis. Stimulates efficient translation and peptide-bond synthesis on native or reconstituted 70S ribosomes in vitro. Probably functions indirectly by altering the affinity of the ribosome for aminoacyl-tRNA, thus increasing their reactivity as acceptors for peptidyl transferase.</text>
</comment>
<comment type="pathway">
    <text evidence="1">Protein biosynthesis; polypeptide chain elongation.</text>
</comment>
<comment type="subcellular location">
    <subcellularLocation>
        <location evidence="1">Cytoplasm</location>
    </subcellularLocation>
</comment>
<comment type="similarity">
    <text evidence="1">Belongs to the elongation factor P family.</text>
</comment>
<accession>Q5LU15</accession>
<dbReference type="EMBL" id="CP000031">
    <property type="protein sequence ID" value="AAV94537.1"/>
    <property type="molecule type" value="Genomic_DNA"/>
</dbReference>
<dbReference type="RefSeq" id="WP_011046986.1">
    <property type="nucleotide sequence ID" value="NC_003911.12"/>
</dbReference>
<dbReference type="SMR" id="Q5LU15"/>
<dbReference type="STRING" id="246200.SPO1244"/>
<dbReference type="PaxDb" id="246200-SPO1244"/>
<dbReference type="KEGG" id="sil:SPO1244"/>
<dbReference type="eggNOG" id="COG0231">
    <property type="taxonomic scope" value="Bacteria"/>
</dbReference>
<dbReference type="HOGENOM" id="CLU_074944_1_1_5"/>
<dbReference type="OrthoDB" id="9801844at2"/>
<dbReference type="UniPathway" id="UPA00345"/>
<dbReference type="Proteomes" id="UP000001023">
    <property type="component" value="Chromosome"/>
</dbReference>
<dbReference type="GO" id="GO:0005737">
    <property type="term" value="C:cytoplasm"/>
    <property type="evidence" value="ECO:0007669"/>
    <property type="project" value="UniProtKB-SubCell"/>
</dbReference>
<dbReference type="GO" id="GO:0003746">
    <property type="term" value="F:translation elongation factor activity"/>
    <property type="evidence" value="ECO:0007669"/>
    <property type="project" value="UniProtKB-UniRule"/>
</dbReference>
<dbReference type="GO" id="GO:0043043">
    <property type="term" value="P:peptide biosynthetic process"/>
    <property type="evidence" value="ECO:0007669"/>
    <property type="project" value="InterPro"/>
</dbReference>
<dbReference type="CDD" id="cd04470">
    <property type="entry name" value="S1_EF-P_repeat_1"/>
    <property type="match status" value="1"/>
</dbReference>
<dbReference type="CDD" id="cd05794">
    <property type="entry name" value="S1_EF-P_repeat_2"/>
    <property type="match status" value="1"/>
</dbReference>
<dbReference type="FunFam" id="2.30.30.30:FF:000003">
    <property type="entry name" value="Elongation factor P"/>
    <property type="match status" value="1"/>
</dbReference>
<dbReference type="FunFam" id="2.40.50.140:FF:000004">
    <property type="entry name" value="Elongation factor P"/>
    <property type="match status" value="1"/>
</dbReference>
<dbReference type="FunFam" id="2.40.50.140:FF:000009">
    <property type="entry name" value="Elongation factor P"/>
    <property type="match status" value="1"/>
</dbReference>
<dbReference type="Gene3D" id="2.30.30.30">
    <property type="match status" value="1"/>
</dbReference>
<dbReference type="Gene3D" id="2.40.50.140">
    <property type="entry name" value="Nucleic acid-binding proteins"/>
    <property type="match status" value="2"/>
</dbReference>
<dbReference type="HAMAP" id="MF_00141">
    <property type="entry name" value="EF_P"/>
    <property type="match status" value="1"/>
</dbReference>
<dbReference type="InterPro" id="IPR015365">
    <property type="entry name" value="Elong-fact-P_C"/>
</dbReference>
<dbReference type="InterPro" id="IPR012340">
    <property type="entry name" value="NA-bd_OB-fold"/>
</dbReference>
<dbReference type="InterPro" id="IPR014722">
    <property type="entry name" value="Rib_uL2_dom2"/>
</dbReference>
<dbReference type="InterPro" id="IPR020599">
    <property type="entry name" value="Transl_elong_fac_P/YeiP"/>
</dbReference>
<dbReference type="InterPro" id="IPR013185">
    <property type="entry name" value="Transl_elong_KOW-like"/>
</dbReference>
<dbReference type="InterPro" id="IPR001059">
    <property type="entry name" value="Transl_elong_P/YeiP_cen"/>
</dbReference>
<dbReference type="InterPro" id="IPR013852">
    <property type="entry name" value="Transl_elong_P/YeiP_CS"/>
</dbReference>
<dbReference type="InterPro" id="IPR011768">
    <property type="entry name" value="Transl_elongation_fac_P"/>
</dbReference>
<dbReference type="InterPro" id="IPR008991">
    <property type="entry name" value="Translation_prot_SH3-like_sf"/>
</dbReference>
<dbReference type="NCBIfam" id="TIGR00038">
    <property type="entry name" value="efp"/>
    <property type="match status" value="1"/>
</dbReference>
<dbReference type="NCBIfam" id="NF001810">
    <property type="entry name" value="PRK00529.1"/>
    <property type="match status" value="1"/>
</dbReference>
<dbReference type="PANTHER" id="PTHR30053">
    <property type="entry name" value="ELONGATION FACTOR P"/>
    <property type="match status" value="1"/>
</dbReference>
<dbReference type="PANTHER" id="PTHR30053:SF14">
    <property type="entry name" value="TRANSLATION ELONGATION FACTOR KOW-LIKE DOMAIN-CONTAINING PROTEIN"/>
    <property type="match status" value="1"/>
</dbReference>
<dbReference type="Pfam" id="PF01132">
    <property type="entry name" value="EFP"/>
    <property type="match status" value="1"/>
</dbReference>
<dbReference type="Pfam" id="PF08207">
    <property type="entry name" value="EFP_N"/>
    <property type="match status" value="1"/>
</dbReference>
<dbReference type="Pfam" id="PF09285">
    <property type="entry name" value="Elong-fact-P_C"/>
    <property type="match status" value="1"/>
</dbReference>
<dbReference type="PIRSF" id="PIRSF005901">
    <property type="entry name" value="EF-P"/>
    <property type="match status" value="1"/>
</dbReference>
<dbReference type="SMART" id="SM01185">
    <property type="entry name" value="EFP"/>
    <property type="match status" value="1"/>
</dbReference>
<dbReference type="SMART" id="SM00841">
    <property type="entry name" value="Elong-fact-P_C"/>
    <property type="match status" value="1"/>
</dbReference>
<dbReference type="SUPFAM" id="SSF50249">
    <property type="entry name" value="Nucleic acid-binding proteins"/>
    <property type="match status" value="2"/>
</dbReference>
<dbReference type="SUPFAM" id="SSF50104">
    <property type="entry name" value="Translation proteins SH3-like domain"/>
    <property type="match status" value="1"/>
</dbReference>
<dbReference type="PROSITE" id="PS01275">
    <property type="entry name" value="EFP"/>
    <property type="match status" value="1"/>
</dbReference>
<protein>
    <recommendedName>
        <fullName evidence="1">Elongation factor P</fullName>
        <shortName evidence="1">EF-P</shortName>
    </recommendedName>
</protein>
<reference key="1">
    <citation type="journal article" date="2004" name="Nature">
        <title>Genome sequence of Silicibacter pomeroyi reveals adaptations to the marine environment.</title>
        <authorList>
            <person name="Moran M.A."/>
            <person name="Buchan A."/>
            <person name="Gonzalez J.M."/>
            <person name="Heidelberg J.F."/>
            <person name="Whitman W.B."/>
            <person name="Kiene R.P."/>
            <person name="Henriksen J.R."/>
            <person name="King G.M."/>
            <person name="Belas R."/>
            <person name="Fuqua C."/>
            <person name="Brinkac L.M."/>
            <person name="Lewis M."/>
            <person name="Johri S."/>
            <person name="Weaver B."/>
            <person name="Pai G."/>
            <person name="Eisen J.A."/>
            <person name="Rahe E."/>
            <person name="Sheldon W.M."/>
            <person name="Ye W."/>
            <person name="Miller T.R."/>
            <person name="Carlton J."/>
            <person name="Rasko D.A."/>
            <person name="Paulsen I.T."/>
            <person name="Ren Q."/>
            <person name="Daugherty S.C."/>
            <person name="DeBoy R.T."/>
            <person name="Dodson R.J."/>
            <person name="Durkin A.S."/>
            <person name="Madupu R."/>
            <person name="Nelson W.C."/>
            <person name="Sullivan S.A."/>
            <person name="Rosovitz M.J."/>
            <person name="Haft D.H."/>
            <person name="Selengut J."/>
            <person name="Ward N."/>
        </authorList>
    </citation>
    <scope>NUCLEOTIDE SEQUENCE [LARGE SCALE GENOMIC DNA]</scope>
    <source>
        <strain>ATCC 700808 / DSM 15171 / DSS-3</strain>
    </source>
</reference>
<reference key="2">
    <citation type="journal article" date="2014" name="Stand. Genomic Sci.">
        <title>An updated genome annotation for the model marine bacterium Ruegeria pomeroyi DSS-3.</title>
        <authorList>
            <person name="Rivers A.R."/>
            <person name="Smith C.B."/>
            <person name="Moran M.A."/>
        </authorList>
    </citation>
    <scope>GENOME REANNOTATION</scope>
    <source>
        <strain>ATCC 700808 / DSM 15171 / DSS-3</strain>
    </source>
</reference>
<feature type="chain" id="PRO_0000094327" description="Elongation factor P">
    <location>
        <begin position="1"/>
        <end position="187"/>
    </location>
</feature>
<name>EFP_RUEPO</name>
<organism>
    <name type="scientific">Ruegeria pomeroyi (strain ATCC 700808 / DSM 15171 / DSS-3)</name>
    <name type="common">Silicibacter pomeroyi</name>
    <dbReference type="NCBI Taxonomy" id="246200"/>
    <lineage>
        <taxon>Bacteria</taxon>
        <taxon>Pseudomonadati</taxon>
        <taxon>Pseudomonadota</taxon>
        <taxon>Alphaproteobacteria</taxon>
        <taxon>Rhodobacterales</taxon>
        <taxon>Roseobacteraceae</taxon>
        <taxon>Ruegeria</taxon>
    </lineage>
</organism>
<proteinExistence type="inferred from homology"/>
<keyword id="KW-0963">Cytoplasm</keyword>
<keyword id="KW-0251">Elongation factor</keyword>
<keyword id="KW-0648">Protein biosynthesis</keyword>
<keyword id="KW-1185">Reference proteome</keyword>
<evidence type="ECO:0000255" key="1">
    <source>
        <dbReference type="HAMAP-Rule" id="MF_00141"/>
    </source>
</evidence>